<proteinExistence type="inferred from homology"/>
<organism>
    <name type="scientific">Drosophila azteca</name>
    <name type="common">Fruit fly</name>
    <dbReference type="NCBI Taxonomy" id="7249"/>
    <lineage>
        <taxon>Eukaryota</taxon>
        <taxon>Metazoa</taxon>
        <taxon>Ecdysozoa</taxon>
        <taxon>Arthropoda</taxon>
        <taxon>Hexapoda</taxon>
        <taxon>Insecta</taxon>
        <taxon>Pterygota</taxon>
        <taxon>Neoptera</taxon>
        <taxon>Endopterygota</taxon>
        <taxon>Diptera</taxon>
        <taxon>Brachycera</taxon>
        <taxon>Muscomorpha</taxon>
        <taxon>Ephydroidea</taxon>
        <taxon>Drosophilidae</taxon>
        <taxon>Drosophila</taxon>
        <taxon>Sophophora</taxon>
    </lineage>
</organism>
<dbReference type="EC" id="7.1.1.2"/>
<dbReference type="EMBL" id="U07283">
    <property type="protein sequence ID" value="AAA76616.1"/>
    <property type="molecule type" value="Genomic_DNA"/>
</dbReference>
<dbReference type="EMBL" id="U07284">
    <property type="protein sequence ID" value="AAA76617.1"/>
    <property type="molecule type" value="Genomic_DNA"/>
</dbReference>
<dbReference type="SMR" id="P84300"/>
<dbReference type="GO" id="GO:0005743">
    <property type="term" value="C:mitochondrial inner membrane"/>
    <property type="evidence" value="ECO:0007669"/>
    <property type="project" value="UniProtKB-SubCell"/>
</dbReference>
<dbReference type="GO" id="GO:0008137">
    <property type="term" value="F:NADH dehydrogenase (ubiquinone) activity"/>
    <property type="evidence" value="ECO:0007669"/>
    <property type="project" value="UniProtKB-EC"/>
</dbReference>
<dbReference type="GO" id="GO:0009060">
    <property type="term" value="P:aerobic respiration"/>
    <property type="evidence" value="ECO:0007669"/>
    <property type="project" value="TreeGrafter"/>
</dbReference>
<dbReference type="InterPro" id="IPR001694">
    <property type="entry name" value="NADH_UbQ_OxRdtase_su1/FPO"/>
</dbReference>
<dbReference type="InterPro" id="IPR018086">
    <property type="entry name" value="NADH_UbQ_OxRdtase_su1_CS"/>
</dbReference>
<dbReference type="PANTHER" id="PTHR11432">
    <property type="entry name" value="NADH DEHYDROGENASE SUBUNIT 1"/>
    <property type="match status" value="1"/>
</dbReference>
<dbReference type="PANTHER" id="PTHR11432:SF3">
    <property type="entry name" value="NADH-UBIQUINONE OXIDOREDUCTASE CHAIN 1"/>
    <property type="match status" value="1"/>
</dbReference>
<dbReference type="Pfam" id="PF00146">
    <property type="entry name" value="NADHdh"/>
    <property type="match status" value="1"/>
</dbReference>
<dbReference type="PROSITE" id="PS00667">
    <property type="entry name" value="COMPLEX1_ND1_1"/>
    <property type="match status" value="1"/>
</dbReference>
<comment type="function">
    <text evidence="1">Core subunit of the mitochondrial membrane respiratory chain NADH dehydrogenase (Complex I) that is believed to belong to the minimal assembly required for catalysis. Complex I functions in the transfer of electrons from NADH to the respiratory chain. The immediate electron acceptor for the enzyme is believed to be ubiquinone (By similarity).</text>
</comment>
<comment type="catalytic activity">
    <reaction>
        <text>a ubiquinone + NADH + 5 H(+)(in) = a ubiquinol + NAD(+) + 4 H(+)(out)</text>
        <dbReference type="Rhea" id="RHEA:29091"/>
        <dbReference type="Rhea" id="RHEA-COMP:9565"/>
        <dbReference type="Rhea" id="RHEA-COMP:9566"/>
        <dbReference type="ChEBI" id="CHEBI:15378"/>
        <dbReference type="ChEBI" id="CHEBI:16389"/>
        <dbReference type="ChEBI" id="CHEBI:17976"/>
        <dbReference type="ChEBI" id="CHEBI:57540"/>
        <dbReference type="ChEBI" id="CHEBI:57945"/>
        <dbReference type="EC" id="7.1.1.2"/>
    </reaction>
</comment>
<comment type="subcellular location">
    <subcellularLocation>
        <location evidence="1">Mitochondrion inner membrane</location>
        <topology evidence="1">Multi-pass membrane protein</topology>
    </subcellularLocation>
</comment>
<comment type="similarity">
    <text evidence="3">Belongs to the complex I subunit 1 family.</text>
</comment>
<accession>P84300</accession>
<accession>P51927</accession>
<accession>P51929</accession>
<accession>Q34282</accession>
<accession>Q34292</accession>
<feature type="chain" id="PRO_0000117388" description="NADH-ubiquinone oxidoreductase chain 1">
    <location>
        <begin position="1"/>
        <end position="163"/>
    </location>
</feature>
<feature type="transmembrane region" description="Helical" evidence="2">
    <location>
        <begin position="3"/>
        <end position="23"/>
    </location>
</feature>
<feature type="transmembrane region" description="Helical" evidence="2">
    <location>
        <begin position="77"/>
        <end position="97"/>
    </location>
</feature>
<feature type="transmembrane region" description="Helical" evidence="2">
    <location>
        <begin position="104"/>
        <end position="124"/>
    </location>
</feature>
<feature type="transmembrane region" description="Helical" evidence="2">
    <location>
        <begin position="143"/>
        <end position="163"/>
    </location>
</feature>
<feature type="non-consecutive residues" evidence="3">
    <location>
        <begin position="152"/>
        <end position="153"/>
    </location>
</feature>
<geneLocation type="mitochondrion"/>
<gene>
    <name type="primary">mt:ND1</name>
    <name type="synonym">ND1</name>
</gene>
<evidence type="ECO:0000250" key="1"/>
<evidence type="ECO:0000255" key="2"/>
<evidence type="ECO:0000305" key="3"/>
<sequence length="163" mass="18238">MEFILSLVGSLLLIICVLVSVAFLTLLERKVLGYIQIRKGPNKVGLMGIPQPFCDAIKLFTKEQTYPLLSNYLSYYISPIFSLFLSLFVWMCMPFFVKLYSFNLGGLFFLCCTSLGVYTVMVAGWSSNSNYALLGGLRAVAQTISYEVSLALIGFKILLFSFL</sequence>
<reference key="1">
    <citation type="journal article" date="1994" name="J. Mol. Evol.">
        <title>Phylogeny of the Drosophila obscura species group deduced from mitochondrial DNA sequences.</title>
        <authorList>
            <person name="Barrio E."/>
            <person name="Latorre A."/>
            <person name="Moya A."/>
        </authorList>
    </citation>
    <scope>NUCLEOTIDE SEQUENCE [GENOMIC DNA]</scope>
</reference>
<protein>
    <recommendedName>
        <fullName>NADH-ubiquinone oxidoreductase chain 1</fullName>
        <ecNumber>7.1.1.2</ecNumber>
    </recommendedName>
    <alternativeName>
        <fullName>NADH dehydrogenase subunit 1</fullName>
    </alternativeName>
</protein>
<keyword id="KW-0249">Electron transport</keyword>
<keyword id="KW-0472">Membrane</keyword>
<keyword id="KW-0496">Mitochondrion</keyword>
<keyword id="KW-0999">Mitochondrion inner membrane</keyword>
<keyword id="KW-0520">NAD</keyword>
<keyword id="KW-0679">Respiratory chain</keyword>
<keyword id="KW-1278">Translocase</keyword>
<keyword id="KW-0812">Transmembrane</keyword>
<keyword id="KW-1133">Transmembrane helix</keyword>
<keyword id="KW-0813">Transport</keyword>
<keyword id="KW-0830">Ubiquinone</keyword>
<name>NU1M_DROAZ</name>